<comment type="function">
    <text evidence="1">Binds directly to 23S ribosomal RNA and is necessary for the in vitro assembly process of the 50S ribosomal subunit. It is not involved in the protein synthesizing functions of that subunit.</text>
</comment>
<comment type="similarity">
    <text evidence="1">Belongs to the bacterial ribosomal protein bL20 family.</text>
</comment>
<feature type="chain" id="PRO_1000049004" description="Large ribosomal subunit protein bL20">
    <location>
        <begin position="1"/>
        <end position="117"/>
    </location>
</feature>
<evidence type="ECO:0000255" key="1">
    <source>
        <dbReference type="HAMAP-Rule" id="MF_00382"/>
    </source>
</evidence>
<evidence type="ECO:0000305" key="2"/>
<protein>
    <recommendedName>
        <fullName evidence="1">Large ribosomal subunit protein bL20</fullName>
    </recommendedName>
    <alternativeName>
        <fullName evidence="2">50S ribosomal protein L20</fullName>
    </alternativeName>
</protein>
<keyword id="KW-0687">Ribonucleoprotein</keyword>
<keyword id="KW-0689">Ribosomal protein</keyword>
<keyword id="KW-0694">RNA-binding</keyword>
<keyword id="KW-0699">rRNA-binding</keyword>
<proteinExistence type="inferred from homology"/>
<accession>Q04ZH1</accession>
<organism>
    <name type="scientific">Leptospira borgpetersenii serovar Hardjo-bovis (strain L550)</name>
    <dbReference type="NCBI Taxonomy" id="355276"/>
    <lineage>
        <taxon>Bacteria</taxon>
        <taxon>Pseudomonadati</taxon>
        <taxon>Spirochaetota</taxon>
        <taxon>Spirochaetia</taxon>
        <taxon>Leptospirales</taxon>
        <taxon>Leptospiraceae</taxon>
        <taxon>Leptospira</taxon>
    </lineage>
</organism>
<reference key="1">
    <citation type="journal article" date="2006" name="Proc. Natl. Acad. Sci. U.S.A.">
        <title>Genome reduction in Leptospira borgpetersenii reflects limited transmission potential.</title>
        <authorList>
            <person name="Bulach D.M."/>
            <person name="Zuerner R.L."/>
            <person name="Wilson P."/>
            <person name="Seemann T."/>
            <person name="McGrath A."/>
            <person name="Cullen P.A."/>
            <person name="Davis J."/>
            <person name="Johnson M."/>
            <person name="Kuczek E."/>
            <person name="Alt D.P."/>
            <person name="Peterson-Burch B."/>
            <person name="Coppel R.L."/>
            <person name="Rood J.I."/>
            <person name="Davies J.K."/>
            <person name="Adler B."/>
        </authorList>
    </citation>
    <scope>NUCLEOTIDE SEQUENCE [LARGE SCALE GENOMIC DNA]</scope>
    <source>
        <strain>L550</strain>
    </source>
</reference>
<gene>
    <name evidence="1" type="primary">rplT</name>
    <name type="ordered locus">LBL_2111</name>
</gene>
<sequence>MPRAVNGTIHKNRRRRVLKDAKGFRGARSKLYRTAKSAVMKAGQWAYRDRRAKKRDFRKLWIIRINAAARENGLSYSVFMNSLKKLGINMDRKSLAELAFNDREVFNALVEKIKVAG</sequence>
<name>RL20_LEPBL</name>
<dbReference type="EMBL" id="CP000348">
    <property type="protein sequence ID" value="ABJ79524.1"/>
    <property type="molecule type" value="Genomic_DNA"/>
</dbReference>
<dbReference type="RefSeq" id="WP_002726297.1">
    <property type="nucleotide sequence ID" value="NC_008508.1"/>
</dbReference>
<dbReference type="SMR" id="Q04ZH1"/>
<dbReference type="GeneID" id="61174780"/>
<dbReference type="KEGG" id="lbl:LBL_2111"/>
<dbReference type="HOGENOM" id="CLU_123265_0_1_12"/>
<dbReference type="GO" id="GO:1990904">
    <property type="term" value="C:ribonucleoprotein complex"/>
    <property type="evidence" value="ECO:0007669"/>
    <property type="project" value="UniProtKB-KW"/>
</dbReference>
<dbReference type="GO" id="GO:0005840">
    <property type="term" value="C:ribosome"/>
    <property type="evidence" value="ECO:0007669"/>
    <property type="project" value="UniProtKB-KW"/>
</dbReference>
<dbReference type="GO" id="GO:0019843">
    <property type="term" value="F:rRNA binding"/>
    <property type="evidence" value="ECO:0007669"/>
    <property type="project" value="UniProtKB-UniRule"/>
</dbReference>
<dbReference type="GO" id="GO:0003735">
    <property type="term" value="F:structural constituent of ribosome"/>
    <property type="evidence" value="ECO:0007669"/>
    <property type="project" value="InterPro"/>
</dbReference>
<dbReference type="GO" id="GO:0000027">
    <property type="term" value="P:ribosomal large subunit assembly"/>
    <property type="evidence" value="ECO:0007669"/>
    <property type="project" value="UniProtKB-UniRule"/>
</dbReference>
<dbReference type="GO" id="GO:0006412">
    <property type="term" value="P:translation"/>
    <property type="evidence" value="ECO:0007669"/>
    <property type="project" value="InterPro"/>
</dbReference>
<dbReference type="CDD" id="cd07026">
    <property type="entry name" value="Ribosomal_L20"/>
    <property type="match status" value="1"/>
</dbReference>
<dbReference type="FunFam" id="1.10.1900.20:FF:000001">
    <property type="entry name" value="50S ribosomal protein L20"/>
    <property type="match status" value="1"/>
</dbReference>
<dbReference type="Gene3D" id="6.10.160.10">
    <property type="match status" value="1"/>
</dbReference>
<dbReference type="Gene3D" id="1.10.1900.20">
    <property type="entry name" value="Ribosomal protein L20"/>
    <property type="match status" value="1"/>
</dbReference>
<dbReference type="HAMAP" id="MF_00382">
    <property type="entry name" value="Ribosomal_bL20"/>
    <property type="match status" value="1"/>
</dbReference>
<dbReference type="InterPro" id="IPR005813">
    <property type="entry name" value="Ribosomal_bL20"/>
</dbReference>
<dbReference type="InterPro" id="IPR049946">
    <property type="entry name" value="RIBOSOMAL_L20_CS"/>
</dbReference>
<dbReference type="InterPro" id="IPR035566">
    <property type="entry name" value="Ribosomal_protein_bL20_C"/>
</dbReference>
<dbReference type="NCBIfam" id="TIGR01032">
    <property type="entry name" value="rplT_bact"/>
    <property type="match status" value="1"/>
</dbReference>
<dbReference type="PANTHER" id="PTHR10986">
    <property type="entry name" value="39S RIBOSOMAL PROTEIN L20"/>
    <property type="match status" value="1"/>
</dbReference>
<dbReference type="Pfam" id="PF00453">
    <property type="entry name" value="Ribosomal_L20"/>
    <property type="match status" value="1"/>
</dbReference>
<dbReference type="PRINTS" id="PR00062">
    <property type="entry name" value="RIBOSOMALL20"/>
</dbReference>
<dbReference type="SUPFAM" id="SSF74731">
    <property type="entry name" value="Ribosomal protein L20"/>
    <property type="match status" value="1"/>
</dbReference>
<dbReference type="PROSITE" id="PS00937">
    <property type="entry name" value="RIBOSOMAL_L20"/>
    <property type="match status" value="1"/>
</dbReference>